<dbReference type="EC" id="2.5.1.55" evidence="1"/>
<dbReference type="EMBL" id="AE017125">
    <property type="protein sequence ID" value="AAP76636.1"/>
    <property type="molecule type" value="Genomic_DNA"/>
</dbReference>
<dbReference type="RefSeq" id="WP_011114882.1">
    <property type="nucleotide sequence ID" value="NC_004917.1"/>
</dbReference>
<dbReference type="SMR" id="Q7VK53"/>
<dbReference type="STRING" id="235279.HH_0039"/>
<dbReference type="KEGG" id="hhe:HH_0039"/>
<dbReference type="eggNOG" id="COG2877">
    <property type="taxonomic scope" value="Bacteria"/>
</dbReference>
<dbReference type="HOGENOM" id="CLU_036666_0_0_7"/>
<dbReference type="OrthoDB" id="9802281at2"/>
<dbReference type="UniPathway" id="UPA00030"/>
<dbReference type="UniPathway" id="UPA00357">
    <property type="reaction ID" value="UER00474"/>
</dbReference>
<dbReference type="Proteomes" id="UP000002495">
    <property type="component" value="Chromosome"/>
</dbReference>
<dbReference type="GO" id="GO:0005737">
    <property type="term" value="C:cytoplasm"/>
    <property type="evidence" value="ECO:0007669"/>
    <property type="project" value="UniProtKB-SubCell"/>
</dbReference>
<dbReference type="GO" id="GO:0008676">
    <property type="term" value="F:3-deoxy-8-phosphooctulonate synthase activity"/>
    <property type="evidence" value="ECO:0007669"/>
    <property type="project" value="UniProtKB-UniRule"/>
</dbReference>
<dbReference type="GO" id="GO:0019294">
    <property type="term" value="P:keto-3-deoxy-D-manno-octulosonic acid biosynthetic process"/>
    <property type="evidence" value="ECO:0007669"/>
    <property type="project" value="UniProtKB-UniRule"/>
</dbReference>
<dbReference type="Gene3D" id="3.20.20.70">
    <property type="entry name" value="Aldolase class I"/>
    <property type="match status" value="1"/>
</dbReference>
<dbReference type="HAMAP" id="MF_00056">
    <property type="entry name" value="KDO8P_synth"/>
    <property type="match status" value="1"/>
</dbReference>
<dbReference type="InterPro" id="IPR013785">
    <property type="entry name" value="Aldolase_TIM"/>
</dbReference>
<dbReference type="InterPro" id="IPR006218">
    <property type="entry name" value="DAHP1/KDSA"/>
</dbReference>
<dbReference type="InterPro" id="IPR006269">
    <property type="entry name" value="KDO8P_synthase"/>
</dbReference>
<dbReference type="NCBIfam" id="TIGR01362">
    <property type="entry name" value="KDO8P_synth"/>
    <property type="match status" value="1"/>
</dbReference>
<dbReference type="NCBIfam" id="NF003543">
    <property type="entry name" value="PRK05198.1"/>
    <property type="match status" value="1"/>
</dbReference>
<dbReference type="PANTHER" id="PTHR21057">
    <property type="entry name" value="PHOSPHO-2-DEHYDRO-3-DEOXYHEPTONATE ALDOLASE"/>
    <property type="match status" value="1"/>
</dbReference>
<dbReference type="Pfam" id="PF00793">
    <property type="entry name" value="DAHP_synth_1"/>
    <property type="match status" value="1"/>
</dbReference>
<dbReference type="SUPFAM" id="SSF51569">
    <property type="entry name" value="Aldolase"/>
    <property type="match status" value="1"/>
</dbReference>
<organism>
    <name type="scientific">Helicobacter hepaticus (strain ATCC 51449 / 3B1)</name>
    <dbReference type="NCBI Taxonomy" id="235279"/>
    <lineage>
        <taxon>Bacteria</taxon>
        <taxon>Pseudomonadati</taxon>
        <taxon>Campylobacterota</taxon>
        <taxon>Epsilonproteobacteria</taxon>
        <taxon>Campylobacterales</taxon>
        <taxon>Helicobacteraceae</taxon>
        <taxon>Helicobacter</taxon>
    </lineage>
</organism>
<evidence type="ECO:0000255" key="1">
    <source>
        <dbReference type="HAMAP-Rule" id="MF_00056"/>
    </source>
</evidence>
<reference key="1">
    <citation type="journal article" date="2003" name="Proc. Natl. Acad. Sci. U.S.A.">
        <title>The complete genome sequence of the carcinogenic bacterium Helicobacter hepaticus.</title>
        <authorList>
            <person name="Suerbaum S."/>
            <person name="Josenhans C."/>
            <person name="Sterzenbach T."/>
            <person name="Drescher B."/>
            <person name="Brandt P."/>
            <person name="Bell M."/>
            <person name="Droege M."/>
            <person name="Fartmann B."/>
            <person name="Fischer H.-P."/>
            <person name="Ge Z."/>
            <person name="Hoerster A."/>
            <person name="Holland R."/>
            <person name="Klein K."/>
            <person name="Koenig J."/>
            <person name="Macko L."/>
            <person name="Mendz G.L."/>
            <person name="Nyakatura G."/>
            <person name="Schauer D.B."/>
            <person name="Shen Z."/>
            <person name="Weber J."/>
            <person name="Frosch M."/>
            <person name="Fox J.G."/>
        </authorList>
    </citation>
    <scope>NUCLEOTIDE SEQUENCE [LARGE SCALE GENOMIC DNA]</scope>
    <source>
        <strain>ATCC 51449 / 3B1</strain>
    </source>
</reference>
<accession>Q7VK53</accession>
<feature type="chain" id="PRO_0000187132" description="2-dehydro-3-deoxyphosphooctonate aldolase">
    <location>
        <begin position="1"/>
        <end position="270"/>
    </location>
</feature>
<name>KDSA_HELHP</name>
<protein>
    <recommendedName>
        <fullName evidence="1">2-dehydro-3-deoxyphosphooctonate aldolase</fullName>
        <ecNumber evidence="1">2.5.1.55</ecNumber>
    </recommendedName>
    <alternativeName>
        <fullName evidence="1">3-deoxy-D-manno-octulosonic acid 8-phosphate synthase</fullName>
    </alternativeName>
    <alternativeName>
        <fullName evidence="1">KDO-8-phosphate synthase</fullName>
        <shortName evidence="1">KDO 8-P synthase</shortName>
        <shortName evidence="1">KDOPS</shortName>
    </alternativeName>
    <alternativeName>
        <fullName evidence="1">Phospho-2-dehydro-3-deoxyoctonate aldolase</fullName>
    </alternativeName>
</protein>
<comment type="catalytic activity">
    <reaction evidence="1">
        <text>D-arabinose 5-phosphate + phosphoenolpyruvate + H2O = 3-deoxy-alpha-D-manno-2-octulosonate-8-phosphate + phosphate</text>
        <dbReference type="Rhea" id="RHEA:14053"/>
        <dbReference type="ChEBI" id="CHEBI:15377"/>
        <dbReference type="ChEBI" id="CHEBI:43474"/>
        <dbReference type="ChEBI" id="CHEBI:57693"/>
        <dbReference type="ChEBI" id="CHEBI:58702"/>
        <dbReference type="ChEBI" id="CHEBI:85985"/>
        <dbReference type="EC" id="2.5.1.55"/>
    </reaction>
</comment>
<comment type="pathway">
    <text evidence="1">Carbohydrate biosynthesis; 3-deoxy-D-manno-octulosonate biosynthesis; 3-deoxy-D-manno-octulosonate from D-ribulose 5-phosphate: step 2/3.</text>
</comment>
<comment type="pathway">
    <text evidence="1">Bacterial outer membrane biogenesis; lipopolysaccharide biosynthesis.</text>
</comment>
<comment type="subcellular location">
    <subcellularLocation>
        <location evidence="1">Cytoplasm</location>
    </subcellularLocation>
</comment>
<comment type="similarity">
    <text evidence="1">Belongs to the KdsA family.</text>
</comment>
<keyword id="KW-0963">Cytoplasm</keyword>
<keyword id="KW-0448">Lipopolysaccharide biosynthesis</keyword>
<keyword id="KW-1185">Reference proteome</keyword>
<keyword id="KW-0808">Transferase</keyword>
<sequence>MILMSGPCVIESYEALSAVAQALKPLSEKAHIDFYFKASFDKANRTSLESYRGPGLEKGLELLSEIKKQFGYKIITDIHESYQAKHIAKVADVIQIPAFLCRQTDLIVEVAKTERIVNIKKGQFMNPSDMQHSVLKAIKTRGGTQATYEQSQKYGIWLTERGSTFGYGNLVVDMRSLVIMRSFAPVIFDATHSVQMPGAAGGKSGGDSSFVPYLARAAAAVGVDGFFMETHLNPKEALSDGPNMVQTNALIPLIEQLYDIENLTQHKNGK</sequence>
<proteinExistence type="inferred from homology"/>
<gene>
    <name evidence="1" type="primary">kdsA</name>
    <name type="ordered locus">HH_0039</name>
</gene>